<keyword id="KW-0141">cGMP biosynthesis</keyword>
<keyword id="KW-0456">Lyase</keyword>
<keyword id="KW-1185">Reference proteome</keyword>
<name>GCC1_ARATH</name>
<accession>Q8L870</accession>
<accession>Q8LFJ7</accession>
<accession>Q9FI93</accession>
<organism>
    <name type="scientific">Arabidopsis thaliana</name>
    <name type="common">Mouse-ear cress</name>
    <dbReference type="NCBI Taxonomy" id="3702"/>
    <lineage>
        <taxon>Eukaryota</taxon>
        <taxon>Viridiplantae</taxon>
        <taxon>Streptophyta</taxon>
        <taxon>Embryophyta</taxon>
        <taxon>Tracheophyta</taxon>
        <taxon>Spermatophyta</taxon>
        <taxon>Magnoliopsida</taxon>
        <taxon>eudicotyledons</taxon>
        <taxon>Gunneridae</taxon>
        <taxon>Pentapetalae</taxon>
        <taxon>rosids</taxon>
        <taxon>malvids</taxon>
        <taxon>Brassicales</taxon>
        <taxon>Brassicaceae</taxon>
        <taxon>Camelineae</taxon>
        <taxon>Arabidopsis</taxon>
    </lineage>
</organism>
<reference key="1">
    <citation type="journal article" date="2003" name="J. Biol. Chem.">
        <title>Identification of a novel protein with guanylyl cyclase activity in Arabidopsis thaliana.</title>
        <authorList>
            <person name="Ludidi N."/>
            <person name="Gehring C."/>
        </authorList>
    </citation>
    <scope>NUCLEOTIDE SEQUENCE [MRNA]</scope>
    <scope>FUNCTION</scope>
    <scope>CATALYTIC ACTIVITY</scope>
    <scope>SUBUNIT</scope>
    <scope>PATHWAY</scope>
    <scope>COFACTOR</scope>
</reference>
<reference key="2">
    <citation type="journal article" date="1999" name="DNA Res.">
        <title>Structural analysis of Arabidopsis thaliana chromosome 5. IX. Sequence features of the regions of 1,011,550 bp covered by seventeen P1 and TAC clones.</title>
        <authorList>
            <person name="Kaneko T."/>
            <person name="Katoh T."/>
            <person name="Sato S."/>
            <person name="Nakamura Y."/>
            <person name="Asamizu E."/>
            <person name="Kotani H."/>
            <person name="Miyajima N."/>
            <person name="Tabata S."/>
        </authorList>
    </citation>
    <scope>NUCLEOTIDE SEQUENCE [LARGE SCALE GENOMIC DNA]</scope>
    <source>
        <strain>cv. Columbia</strain>
    </source>
</reference>
<reference key="3">
    <citation type="journal article" date="2017" name="Plant J.">
        <title>Araport11: a complete reannotation of the Arabidopsis thaliana reference genome.</title>
        <authorList>
            <person name="Cheng C.Y."/>
            <person name="Krishnakumar V."/>
            <person name="Chan A.P."/>
            <person name="Thibaud-Nissen F."/>
            <person name="Schobel S."/>
            <person name="Town C.D."/>
        </authorList>
    </citation>
    <scope>GENOME REANNOTATION</scope>
    <source>
        <strain>cv. Columbia</strain>
    </source>
</reference>
<reference key="4">
    <citation type="submission" date="2006-02" db="EMBL/GenBank/DDBJ databases">
        <title>Arabidopsis ORF clones.</title>
        <authorList>
            <person name="Shinn P."/>
            <person name="Chen H."/>
            <person name="Kim C.J."/>
            <person name="Ecker J.R."/>
        </authorList>
    </citation>
    <scope>NUCLEOTIDE SEQUENCE [LARGE SCALE MRNA]</scope>
    <source>
        <strain>cv. Columbia</strain>
    </source>
</reference>
<reference key="5">
    <citation type="submission" date="2006-07" db="EMBL/GenBank/DDBJ databases">
        <title>Large-scale analysis of RIKEN Arabidopsis full-length (RAFL) cDNAs.</title>
        <authorList>
            <person name="Totoki Y."/>
            <person name="Seki M."/>
            <person name="Ishida J."/>
            <person name="Nakajima M."/>
            <person name="Enju A."/>
            <person name="Kamiya A."/>
            <person name="Narusaka M."/>
            <person name="Shin-i T."/>
            <person name="Nakagawa M."/>
            <person name="Sakamoto N."/>
            <person name="Oishi K."/>
            <person name="Kohara Y."/>
            <person name="Kobayashi M."/>
            <person name="Toyoda A."/>
            <person name="Sakaki Y."/>
            <person name="Sakurai T."/>
            <person name="Iida K."/>
            <person name="Akiyama K."/>
            <person name="Satou M."/>
            <person name="Toyoda T."/>
            <person name="Konagaya A."/>
            <person name="Carninci P."/>
            <person name="Kawai J."/>
            <person name="Hayashizaki Y."/>
            <person name="Shinozaki K."/>
        </authorList>
    </citation>
    <scope>NUCLEOTIDE SEQUENCE [LARGE SCALE MRNA]</scope>
    <source>
        <strain>cv. Columbia</strain>
    </source>
</reference>
<reference key="6">
    <citation type="submission" date="2002-03" db="EMBL/GenBank/DDBJ databases">
        <title>Full-length cDNA from Arabidopsis thaliana.</title>
        <authorList>
            <person name="Brover V.V."/>
            <person name="Troukhan M.E."/>
            <person name="Alexandrov N.A."/>
            <person name="Lu Y.-P."/>
            <person name="Flavell R.B."/>
            <person name="Feldmann K.A."/>
        </authorList>
    </citation>
    <scope>NUCLEOTIDE SEQUENCE [LARGE SCALE MRNA]</scope>
</reference>
<protein>
    <recommendedName>
        <fullName evidence="2">Guanylyl cyclase 1</fullName>
        <shortName evidence="2">AtGC1</shortName>
        <ecNumber evidence="1">4.6.1.2</ecNumber>
    </recommendedName>
</protein>
<comment type="function">
    <text evidence="1">Magnesium-dependent guanylyl cyclase that catalyzes the formation of guanosine 3',5'-cyclic monophosphate (cGMP) from guanosine 5'-triphosphate (GTP) (PubMed:12482758). Can also use ATP as substrate with a low activity (PubMed:12482758).</text>
</comment>
<comment type="catalytic activity">
    <reaction evidence="1">
        <text>GTP = 3',5'-cyclic GMP + diphosphate</text>
        <dbReference type="Rhea" id="RHEA:13665"/>
        <dbReference type="ChEBI" id="CHEBI:33019"/>
        <dbReference type="ChEBI" id="CHEBI:37565"/>
        <dbReference type="ChEBI" id="CHEBI:57746"/>
        <dbReference type="EC" id="4.6.1.2"/>
    </reaction>
</comment>
<comment type="cofactor">
    <cofactor evidence="1">
        <name>Mg(2+)</name>
        <dbReference type="ChEBI" id="CHEBI:18420"/>
    </cofactor>
</comment>
<comment type="pathway">
    <text evidence="1">Nucleotide metabolism.</text>
</comment>
<comment type="subunit">
    <text evidence="1">Functions both as monomer and homooligomer.</text>
</comment>
<comment type="sequence caution" evidence="3">
    <conflict type="erroneous gene model prediction">
        <sequence resource="EMBL-CDS" id="BAB10798"/>
    </conflict>
</comment>
<evidence type="ECO:0000269" key="1">
    <source>
    </source>
</evidence>
<evidence type="ECO:0000303" key="2">
    <source>
    </source>
</evidence>
<evidence type="ECO:0000305" key="3"/>
<evidence type="ECO:0000312" key="4">
    <source>
        <dbReference type="Araport" id="AT5G05930"/>
    </source>
</evidence>
<evidence type="ECO:0000312" key="5">
    <source>
        <dbReference type="EMBL" id="BAB10798.1"/>
    </source>
</evidence>
<dbReference type="EC" id="4.6.1.2" evidence="1"/>
<dbReference type="EMBL" id="AY118140">
    <property type="protein sequence ID" value="AAM51559.1"/>
    <property type="molecule type" value="mRNA"/>
</dbReference>
<dbReference type="EMBL" id="AB017060">
    <property type="protein sequence ID" value="BAB10798.1"/>
    <property type="status" value="ALT_SEQ"/>
    <property type="molecule type" value="Genomic_DNA"/>
</dbReference>
<dbReference type="EMBL" id="CP002688">
    <property type="protein sequence ID" value="AED90941.1"/>
    <property type="molecule type" value="Genomic_DNA"/>
</dbReference>
<dbReference type="EMBL" id="BT024499">
    <property type="protein sequence ID" value="ABD19680.1"/>
    <property type="molecule type" value="mRNA"/>
</dbReference>
<dbReference type="EMBL" id="AK229272">
    <property type="protein sequence ID" value="BAF01136.1"/>
    <property type="molecule type" value="mRNA"/>
</dbReference>
<dbReference type="EMBL" id="AY084807">
    <property type="protein sequence ID" value="AAM61373.1"/>
    <property type="molecule type" value="mRNA"/>
</dbReference>
<dbReference type="RefSeq" id="NP_568159.1">
    <property type="nucleotide sequence ID" value="NM_120675.5"/>
</dbReference>
<dbReference type="FunCoup" id="Q8L870">
    <property type="interactions" value="517"/>
</dbReference>
<dbReference type="STRING" id="3702.Q8L870"/>
<dbReference type="PaxDb" id="3702-AT5G05930.1"/>
<dbReference type="EnsemblPlants" id="AT5G05930.1">
    <property type="protein sequence ID" value="AT5G05930.1"/>
    <property type="gene ID" value="AT5G05930"/>
</dbReference>
<dbReference type="GeneID" id="830478"/>
<dbReference type="Gramene" id="AT5G05930.1">
    <property type="protein sequence ID" value="AT5G05930.1"/>
    <property type="gene ID" value="AT5G05930"/>
</dbReference>
<dbReference type="KEGG" id="ath:AT5G05930"/>
<dbReference type="Araport" id="AT5G05930"/>
<dbReference type="TAIR" id="AT5G05930">
    <property type="gene designation" value="GC1"/>
</dbReference>
<dbReference type="eggNOG" id="KOG4621">
    <property type="taxonomic scope" value="Eukaryota"/>
</dbReference>
<dbReference type="HOGENOM" id="CLU_064395_1_0_1"/>
<dbReference type="InParanoid" id="Q8L870"/>
<dbReference type="OMA" id="VQDIQKH"/>
<dbReference type="OrthoDB" id="206796at2759"/>
<dbReference type="PhylomeDB" id="Q8L870"/>
<dbReference type="PRO" id="PR:Q8L870"/>
<dbReference type="Proteomes" id="UP000006548">
    <property type="component" value="Chromosome 5"/>
</dbReference>
<dbReference type="ExpressionAtlas" id="Q8L870">
    <property type="expression patterns" value="baseline and differential"/>
</dbReference>
<dbReference type="GO" id="GO:0004383">
    <property type="term" value="F:guanylate cyclase activity"/>
    <property type="evidence" value="ECO:0000314"/>
    <property type="project" value="UniProtKB"/>
</dbReference>
<dbReference type="GO" id="GO:0006182">
    <property type="term" value="P:cGMP biosynthetic process"/>
    <property type="evidence" value="ECO:0000314"/>
    <property type="project" value="UniProtKB"/>
</dbReference>
<dbReference type="Gene3D" id="3.90.70.10">
    <property type="entry name" value="Cysteine proteinases"/>
    <property type="match status" value="1"/>
</dbReference>
<dbReference type="InterPro" id="IPR018616">
    <property type="entry name" value="GUCD1"/>
</dbReference>
<dbReference type="PANTHER" id="PTHR31400">
    <property type="entry name" value="GUANYLYL CYCLASE DOMAIN CONTAINING PROTEIN 1 GUCD1"/>
    <property type="match status" value="1"/>
</dbReference>
<dbReference type="PANTHER" id="PTHR31400:SF1">
    <property type="entry name" value="PROTEIN GUCD1"/>
    <property type="match status" value="1"/>
</dbReference>
<dbReference type="Pfam" id="PF09778">
    <property type="entry name" value="Guanylate_cyc_2"/>
    <property type="match status" value="1"/>
</dbReference>
<gene>
    <name evidence="2" type="primary">GC1</name>
    <name evidence="4" type="ordered locus">At5g05930</name>
    <name evidence="5" type="ORF">K18J17.8</name>
</gene>
<feature type="chain" id="PRO_0000447483" description="Guanylyl cyclase 1">
    <location>
        <begin position="1"/>
        <end position="274"/>
    </location>
</feature>
<proteinExistence type="evidence at protein level"/>
<sequence length="274" mass="30914">MWPLCFLLNKLLRVEERNQGILDGNGDSTFPKYCLFDDPLVSDGKYRDAGLPSSSHMDVPHVHQLASWDCGLACVLMVLRASGIASCTLEDLAEICSTNSIWTVDLAYLLQKFCVEFSYYTITFGANPNYSIEEFYKEQLPEDLVRVDLLFRKAHESGIIIQCRSVSIHEISCLLLSGNYIAIALVDQDKLSKSWLEEVLVSGLHSSNSCYTGHYVVICGYDAVRDEFEIRDPASSKIHERISSKCLENARKSFGTDEDLLLINLENMRNQNGY</sequence>